<proteinExistence type="inferred from homology"/>
<dbReference type="EC" id="2.1.1.242" evidence="1"/>
<dbReference type="EMBL" id="CP000471">
    <property type="protein sequence ID" value="ABK44390.1"/>
    <property type="molecule type" value="Genomic_DNA"/>
</dbReference>
<dbReference type="RefSeq" id="WP_011713534.1">
    <property type="nucleotide sequence ID" value="NC_008576.1"/>
</dbReference>
<dbReference type="SMR" id="A0L8U7"/>
<dbReference type="STRING" id="156889.Mmc1_1882"/>
<dbReference type="KEGG" id="mgm:Mmc1_1882"/>
<dbReference type="eggNOG" id="COG0500">
    <property type="taxonomic scope" value="Bacteria"/>
</dbReference>
<dbReference type="HOGENOM" id="CLU_076324_0_1_5"/>
<dbReference type="OrthoDB" id="3191794at2"/>
<dbReference type="Proteomes" id="UP000002586">
    <property type="component" value="Chromosome"/>
</dbReference>
<dbReference type="GO" id="GO:0005737">
    <property type="term" value="C:cytoplasm"/>
    <property type="evidence" value="ECO:0007669"/>
    <property type="project" value="UniProtKB-SubCell"/>
</dbReference>
<dbReference type="GO" id="GO:0008990">
    <property type="term" value="F:rRNA (guanine-N2-)-methyltransferase activity"/>
    <property type="evidence" value="ECO:0007669"/>
    <property type="project" value="UniProtKB-UniRule"/>
</dbReference>
<dbReference type="CDD" id="cd02440">
    <property type="entry name" value="AdoMet_MTases"/>
    <property type="match status" value="1"/>
</dbReference>
<dbReference type="Gene3D" id="3.40.50.150">
    <property type="entry name" value="Vaccinia Virus protein VP39"/>
    <property type="match status" value="1"/>
</dbReference>
<dbReference type="HAMAP" id="MF_01523">
    <property type="entry name" value="16SrRNA_methyltr_J"/>
    <property type="match status" value="1"/>
</dbReference>
<dbReference type="InterPro" id="IPR007536">
    <property type="entry name" value="16SrRNA_methylTrfase_J"/>
</dbReference>
<dbReference type="InterPro" id="IPR029063">
    <property type="entry name" value="SAM-dependent_MTases_sf"/>
</dbReference>
<dbReference type="PANTHER" id="PTHR36112">
    <property type="entry name" value="RIBOSOMAL RNA SMALL SUBUNIT METHYLTRANSFERASE J"/>
    <property type="match status" value="1"/>
</dbReference>
<dbReference type="PANTHER" id="PTHR36112:SF1">
    <property type="entry name" value="RIBOSOMAL RNA SMALL SUBUNIT METHYLTRANSFERASE J"/>
    <property type="match status" value="1"/>
</dbReference>
<dbReference type="Pfam" id="PF04445">
    <property type="entry name" value="SAM_MT"/>
    <property type="match status" value="1"/>
</dbReference>
<dbReference type="SUPFAM" id="SSF53335">
    <property type="entry name" value="S-adenosyl-L-methionine-dependent methyltransferases"/>
    <property type="match status" value="1"/>
</dbReference>
<reference key="1">
    <citation type="journal article" date="2009" name="Appl. Environ. Microbiol.">
        <title>Complete genome sequence of the chemolithoautotrophic marine magnetotactic coccus strain MC-1.</title>
        <authorList>
            <person name="Schubbe S."/>
            <person name="Williams T.J."/>
            <person name="Xie G."/>
            <person name="Kiss H.E."/>
            <person name="Brettin T.S."/>
            <person name="Martinez D."/>
            <person name="Ross C.A."/>
            <person name="Schuler D."/>
            <person name="Cox B.L."/>
            <person name="Nealson K.H."/>
            <person name="Bazylinski D.A."/>
        </authorList>
    </citation>
    <scope>NUCLEOTIDE SEQUENCE [LARGE SCALE GENOMIC DNA]</scope>
    <source>
        <strain>ATCC BAA-1437 / JCM 17883 / MC-1</strain>
    </source>
</reference>
<accession>A0L8U7</accession>
<evidence type="ECO:0000255" key="1">
    <source>
        <dbReference type="HAMAP-Rule" id="MF_01523"/>
    </source>
</evidence>
<sequence length="253" mass="27559">MSLLSVMPATTAQQSRAEQVAHHFHWPLVAVEALCPTPLLLWVGPTGLALKSADGKHQHPITAQLQGGSIGLAGPDSWVRGQPLARAVGIKGQHTPTVVDATAGLGGDGWLMARMGCSMHWAERVPLMGLLLQEGLEQAHQDAQRAEVARRVTLHQADAIQLLQNMQEPPQVVYLDPMFPHEGKGSLPRKAMVQLRQLAGEDQDLPQLFELAMATAEQRVVLKRPLKAPLLTRAKPNFQLKGRSTRFDVYATG</sequence>
<protein>
    <recommendedName>
        <fullName evidence="1">Ribosomal RNA small subunit methyltransferase J</fullName>
        <ecNumber evidence="1">2.1.1.242</ecNumber>
    </recommendedName>
    <alternativeName>
        <fullName evidence="1">16S rRNA m2G1516 methyltransferase</fullName>
    </alternativeName>
    <alternativeName>
        <fullName evidence="1">rRNA (guanine-N(2)-)-methyltransferase</fullName>
    </alternativeName>
</protein>
<organism>
    <name type="scientific">Magnetococcus marinus (strain ATCC BAA-1437 / JCM 17883 / MC-1)</name>
    <dbReference type="NCBI Taxonomy" id="156889"/>
    <lineage>
        <taxon>Bacteria</taxon>
        <taxon>Pseudomonadati</taxon>
        <taxon>Pseudomonadota</taxon>
        <taxon>Alphaproteobacteria</taxon>
        <taxon>Magnetococcales</taxon>
        <taxon>Magnetococcaceae</taxon>
        <taxon>Magnetococcus</taxon>
    </lineage>
</organism>
<comment type="function">
    <text evidence="1">Specifically methylates the guanosine in position 1516 of 16S rRNA.</text>
</comment>
<comment type="catalytic activity">
    <reaction evidence="1">
        <text>guanosine(1516) in 16S rRNA + S-adenosyl-L-methionine = N(2)-methylguanosine(1516) in 16S rRNA + S-adenosyl-L-homocysteine + H(+)</text>
        <dbReference type="Rhea" id="RHEA:43220"/>
        <dbReference type="Rhea" id="RHEA-COMP:10412"/>
        <dbReference type="Rhea" id="RHEA-COMP:10413"/>
        <dbReference type="ChEBI" id="CHEBI:15378"/>
        <dbReference type="ChEBI" id="CHEBI:57856"/>
        <dbReference type="ChEBI" id="CHEBI:59789"/>
        <dbReference type="ChEBI" id="CHEBI:74269"/>
        <dbReference type="ChEBI" id="CHEBI:74481"/>
        <dbReference type="EC" id="2.1.1.242"/>
    </reaction>
</comment>
<comment type="subcellular location">
    <subcellularLocation>
        <location evidence="1">Cytoplasm</location>
    </subcellularLocation>
</comment>
<comment type="similarity">
    <text evidence="1">Belongs to the methyltransferase superfamily. RsmJ family.</text>
</comment>
<keyword id="KW-0963">Cytoplasm</keyword>
<keyword id="KW-0489">Methyltransferase</keyword>
<keyword id="KW-1185">Reference proteome</keyword>
<keyword id="KW-0698">rRNA processing</keyword>
<keyword id="KW-0949">S-adenosyl-L-methionine</keyword>
<keyword id="KW-0808">Transferase</keyword>
<name>RSMJ_MAGMM</name>
<gene>
    <name evidence="1" type="primary">rsmJ</name>
    <name type="ordered locus">Mmc1_1882</name>
</gene>
<feature type="chain" id="PRO_0000292637" description="Ribosomal RNA small subunit methyltransferase J">
    <location>
        <begin position="1"/>
        <end position="253"/>
    </location>
</feature>
<feature type="binding site" evidence="1">
    <location>
        <begin position="123"/>
        <end position="124"/>
    </location>
    <ligand>
        <name>S-adenosyl-L-methionine</name>
        <dbReference type="ChEBI" id="CHEBI:59789"/>
    </ligand>
</feature>
<feature type="binding site" evidence="1">
    <location>
        <position position="176"/>
    </location>
    <ligand>
        <name>S-adenosyl-L-methionine</name>
        <dbReference type="ChEBI" id="CHEBI:59789"/>
    </ligand>
</feature>